<name>ATPA_THESQ</name>
<feature type="chain" id="PRO_1000143449" description="ATP synthase subunit alpha">
    <location>
        <begin position="1"/>
        <end position="503"/>
    </location>
</feature>
<feature type="binding site" evidence="1">
    <location>
        <begin position="170"/>
        <end position="177"/>
    </location>
    <ligand>
        <name>ATP</name>
        <dbReference type="ChEBI" id="CHEBI:30616"/>
    </ligand>
</feature>
<feature type="site" description="Required for activity" evidence="1">
    <location>
        <position position="363"/>
    </location>
</feature>
<dbReference type="EC" id="7.1.2.2" evidence="1"/>
<dbReference type="EMBL" id="CP000969">
    <property type="protein sequence ID" value="ACB09619.1"/>
    <property type="molecule type" value="Genomic_DNA"/>
</dbReference>
<dbReference type="RefSeq" id="WP_004082064.1">
    <property type="nucleotide sequence ID" value="NC_010483.1"/>
</dbReference>
<dbReference type="SMR" id="B1LBC1"/>
<dbReference type="KEGG" id="trq:TRQ2_1275"/>
<dbReference type="HOGENOM" id="CLU_010091_2_1_0"/>
<dbReference type="Proteomes" id="UP000001687">
    <property type="component" value="Chromosome"/>
</dbReference>
<dbReference type="GO" id="GO:0005886">
    <property type="term" value="C:plasma membrane"/>
    <property type="evidence" value="ECO:0007669"/>
    <property type="project" value="UniProtKB-SubCell"/>
</dbReference>
<dbReference type="GO" id="GO:0045259">
    <property type="term" value="C:proton-transporting ATP synthase complex"/>
    <property type="evidence" value="ECO:0007669"/>
    <property type="project" value="UniProtKB-KW"/>
</dbReference>
<dbReference type="GO" id="GO:0043531">
    <property type="term" value="F:ADP binding"/>
    <property type="evidence" value="ECO:0007669"/>
    <property type="project" value="TreeGrafter"/>
</dbReference>
<dbReference type="GO" id="GO:0005524">
    <property type="term" value="F:ATP binding"/>
    <property type="evidence" value="ECO:0007669"/>
    <property type="project" value="UniProtKB-UniRule"/>
</dbReference>
<dbReference type="GO" id="GO:0046933">
    <property type="term" value="F:proton-transporting ATP synthase activity, rotational mechanism"/>
    <property type="evidence" value="ECO:0007669"/>
    <property type="project" value="UniProtKB-UniRule"/>
</dbReference>
<dbReference type="CDD" id="cd18113">
    <property type="entry name" value="ATP-synt_F1_alpha_C"/>
    <property type="match status" value="1"/>
</dbReference>
<dbReference type="CDD" id="cd18116">
    <property type="entry name" value="ATP-synt_F1_alpha_N"/>
    <property type="match status" value="1"/>
</dbReference>
<dbReference type="CDD" id="cd01132">
    <property type="entry name" value="F1-ATPase_alpha_CD"/>
    <property type="match status" value="1"/>
</dbReference>
<dbReference type="FunFam" id="1.20.150.20:FF:000001">
    <property type="entry name" value="ATP synthase subunit alpha"/>
    <property type="match status" value="1"/>
</dbReference>
<dbReference type="FunFam" id="2.40.30.20:FF:000001">
    <property type="entry name" value="ATP synthase subunit alpha"/>
    <property type="match status" value="1"/>
</dbReference>
<dbReference type="FunFam" id="3.40.50.300:FF:000002">
    <property type="entry name" value="ATP synthase subunit alpha"/>
    <property type="match status" value="1"/>
</dbReference>
<dbReference type="Gene3D" id="2.40.30.20">
    <property type="match status" value="1"/>
</dbReference>
<dbReference type="Gene3D" id="1.20.150.20">
    <property type="entry name" value="ATP synthase alpha/beta chain, C-terminal domain"/>
    <property type="match status" value="1"/>
</dbReference>
<dbReference type="Gene3D" id="3.40.50.300">
    <property type="entry name" value="P-loop containing nucleotide triphosphate hydrolases"/>
    <property type="match status" value="1"/>
</dbReference>
<dbReference type="HAMAP" id="MF_01346">
    <property type="entry name" value="ATP_synth_alpha_bact"/>
    <property type="match status" value="1"/>
</dbReference>
<dbReference type="InterPro" id="IPR023366">
    <property type="entry name" value="ATP_synth_asu-like_sf"/>
</dbReference>
<dbReference type="InterPro" id="IPR000793">
    <property type="entry name" value="ATP_synth_asu_C"/>
</dbReference>
<dbReference type="InterPro" id="IPR038376">
    <property type="entry name" value="ATP_synth_asu_C_sf"/>
</dbReference>
<dbReference type="InterPro" id="IPR033732">
    <property type="entry name" value="ATP_synth_F1_a_nt-bd_dom"/>
</dbReference>
<dbReference type="InterPro" id="IPR005294">
    <property type="entry name" value="ATP_synth_F1_asu"/>
</dbReference>
<dbReference type="InterPro" id="IPR020003">
    <property type="entry name" value="ATPase_a/bsu_AS"/>
</dbReference>
<dbReference type="InterPro" id="IPR004100">
    <property type="entry name" value="ATPase_F1/V1/A1_a/bsu_N"/>
</dbReference>
<dbReference type="InterPro" id="IPR036121">
    <property type="entry name" value="ATPase_F1/V1/A1_a/bsu_N_sf"/>
</dbReference>
<dbReference type="InterPro" id="IPR000194">
    <property type="entry name" value="ATPase_F1/V1/A1_a/bsu_nucl-bd"/>
</dbReference>
<dbReference type="InterPro" id="IPR027417">
    <property type="entry name" value="P-loop_NTPase"/>
</dbReference>
<dbReference type="NCBIfam" id="TIGR00962">
    <property type="entry name" value="atpA"/>
    <property type="match status" value="1"/>
</dbReference>
<dbReference type="NCBIfam" id="NF009884">
    <property type="entry name" value="PRK13343.1"/>
    <property type="match status" value="1"/>
</dbReference>
<dbReference type="PANTHER" id="PTHR48082">
    <property type="entry name" value="ATP SYNTHASE SUBUNIT ALPHA, MITOCHONDRIAL"/>
    <property type="match status" value="1"/>
</dbReference>
<dbReference type="PANTHER" id="PTHR48082:SF2">
    <property type="entry name" value="ATP SYNTHASE SUBUNIT ALPHA, MITOCHONDRIAL"/>
    <property type="match status" value="1"/>
</dbReference>
<dbReference type="Pfam" id="PF00006">
    <property type="entry name" value="ATP-synt_ab"/>
    <property type="match status" value="1"/>
</dbReference>
<dbReference type="Pfam" id="PF00306">
    <property type="entry name" value="ATP-synt_ab_C"/>
    <property type="match status" value="1"/>
</dbReference>
<dbReference type="Pfam" id="PF02874">
    <property type="entry name" value="ATP-synt_ab_N"/>
    <property type="match status" value="1"/>
</dbReference>
<dbReference type="PIRSF" id="PIRSF039088">
    <property type="entry name" value="F_ATPase_subunit_alpha"/>
    <property type="match status" value="1"/>
</dbReference>
<dbReference type="SUPFAM" id="SSF47917">
    <property type="entry name" value="C-terminal domain of alpha and beta subunits of F1 ATP synthase"/>
    <property type="match status" value="1"/>
</dbReference>
<dbReference type="SUPFAM" id="SSF50615">
    <property type="entry name" value="N-terminal domain of alpha and beta subunits of F1 ATP synthase"/>
    <property type="match status" value="1"/>
</dbReference>
<dbReference type="SUPFAM" id="SSF52540">
    <property type="entry name" value="P-loop containing nucleoside triphosphate hydrolases"/>
    <property type="match status" value="1"/>
</dbReference>
<dbReference type="PROSITE" id="PS00152">
    <property type="entry name" value="ATPASE_ALPHA_BETA"/>
    <property type="match status" value="1"/>
</dbReference>
<keyword id="KW-0066">ATP synthesis</keyword>
<keyword id="KW-0067">ATP-binding</keyword>
<keyword id="KW-0997">Cell inner membrane</keyword>
<keyword id="KW-1003">Cell membrane</keyword>
<keyword id="KW-0139">CF(1)</keyword>
<keyword id="KW-0375">Hydrogen ion transport</keyword>
<keyword id="KW-0406">Ion transport</keyword>
<keyword id="KW-0472">Membrane</keyword>
<keyword id="KW-0547">Nucleotide-binding</keyword>
<keyword id="KW-1278">Translocase</keyword>
<keyword id="KW-0813">Transport</keyword>
<accession>B1LBC1</accession>
<reference key="1">
    <citation type="journal article" date="2011" name="J. Bacteriol.">
        <title>Genome sequence of Thermotoga sp. strain RQ2, a hyperthermophilic bacterium isolated from a geothermally heated region of the seafloor near Ribeira Quente, the Azores.</title>
        <authorList>
            <person name="Swithers K.S."/>
            <person name="DiPippo J.L."/>
            <person name="Bruce D.C."/>
            <person name="Detter C."/>
            <person name="Tapia R."/>
            <person name="Han S."/>
            <person name="Saunders E."/>
            <person name="Goodwin L.A."/>
            <person name="Han J."/>
            <person name="Woyke T."/>
            <person name="Pitluck S."/>
            <person name="Pennacchio L."/>
            <person name="Nolan M."/>
            <person name="Mikhailova N."/>
            <person name="Lykidis A."/>
            <person name="Land M.L."/>
            <person name="Brettin T."/>
            <person name="Stetter K.O."/>
            <person name="Nelson K.E."/>
            <person name="Gogarten J.P."/>
            <person name="Noll K.M."/>
        </authorList>
    </citation>
    <scope>NUCLEOTIDE SEQUENCE [LARGE SCALE GENOMIC DNA]</scope>
    <source>
        <strain>RQ2</strain>
    </source>
</reference>
<gene>
    <name evidence="1" type="primary">atpA</name>
    <name type="ordered locus">TRQ2_1275</name>
</gene>
<sequence>MRINPGEITKVLEEKIKSFEEKIDLEDTGKVIQVGDGIARAYGLNKVMVSELVEFVETGVKGVAFNLEEDNVGIIILGEYKDIKEGHTVRRLKRIIEVPVGEELLGRVVNPLGEPLDGKGPINAKNFRPIEIKAPGVIYRKPVDTPLQTGIKAIDSMIPIGRGQRELIIGDRQTGKTAIAIDTIINQKGQGVYCIYVAIGQKKSAIARIIDKLRQYGAMEYTTVVVASASDPASLQYIAPYAGCAMGEYFAYSGRDALVVYDDLSKHAVAYRQLSLLMRRPPGREAYPGDIFYLHSRLLERAVRLNDKLGGGSLTALPIVETQANDISAYIPTNVISITDGQIYLEPGLFYAGQRPAINVGLSVSRVGGSAQIKAMKQVAGMLRIDLAQYRELETFAQFATELDPATRAQIIRGQRLMELLKQEQYSPMPVEEQVVVLFAGVRGYLDDLPVEEVRRFEKEFLRFMHEKHQDILDDIKTKKELTSETEEKLKKAIEEFKTTFRV</sequence>
<comment type="function">
    <text evidence="1">Produces ATP from ADP in the presence of a proton gradient across the membrane. The alpha chain is a regulatory subunit.</text>
</comment>
<comment type="catalytic activity">
    <reaction evidence="1">
        <text>ATP + H2O + 4 H(+)(in) = ADP + phosphate + 5 H(+)(out)</text>
        <dbReference type="Rhea" id="RHEA:57720"/>
        <dbReference type="ChEBI" id="CHEBI:15377"/>
        <dbReference type="ChEBI" id="CHEBI:15378"/>
        <dbReference type="ChEBI" id="CHEBI:30616"/>
        <dbReference type="ChEBI" id="CHEBI:43474"/>
        <dbReference type="ChEBI" id="CHEBI:456216"/>
        <dbReference type="EC" id="7.1.2.2"/>
    </reaction>
</comment>
<comment type="subunit">
    <text evidence="1">F-type ATPases have 2 components, CF(1) - the catalytic core - and CF(0) - the membrane proton channel. CF(1) has five subunits: alpha(3), beta(3), gamma(1), delta(1), epsilon(1). CF(0) has three main subunits: a(1), b(2) and c(9-12). The alpha and beta chains form an alternating ring which encloses part of the gamma chain. CF(1) is attached to CF(0) by a central stalk formed by the gamma and epsilon chains, while a peripheral stalk is formed by the delta and b chains.</text>
</comment>
<comment type="subcellular location">
    <subcellularLocation>
        <location evidence="1">Cell inner membrane</location>
        <topology evidence="1">Peripheral membrane protein</topology>
    </subcellularLocation>
</comment>
<comment type="similarity">
    <text evidence="1">Belongs to the ATPase alpha/beta chains family.</text>
</comment>
<evidence type="ECO:0000255" key="1">
    <source>
        <dbReference type="HAMAP-Rule" id="MF_01346"/>
    </source>
</evidence>
<organism>
    <name type="scientific">Thermotoga sp. (strain RQ2)</name>
    <dbReference type="NCBI Taxonomy" id="126740"/>
    <lineage>
        <taxon>Bacteria</taxon>
        <taxon>Thermotogati</taxon>
        <taxon>Thermotogota</taxon>
        <taxon>Thermotogae</taxon>
        <taxon>Thermotogales</taxon>
        <taxon>Thermotogaceae</taxon>
        <taxon>Thermotoga</taxon>
    </lineage>
</organism>
<proteinExistence type="inferred from homology"/>
<protein>
    <recommendedName>
        <fullName evidence="1">ATP synthase subunit alpha</fullName>
        <ecNumber evidence="1">7.1.2.2</ecNumber>
    </recommendedName>
    <alternativeName>
        <fullName evidence="1">ATP synthase F1 sector subunit alpha</fullName>
    </alternativeName>
    <alternativeName>
        <fullName evidence="1">F-ATPase subunit alpha</fullName>
    </alternativeName>
</protein>